<name>AATC_THEVO</name>
<sequence>MDATYVGAYGRLKVYEVDFLKKDFLEHLISLDKPSDFSSVLYASVYKEDYDALTSIYREPDLTEMAINRHLVRMNRIAAFAIPPLAKNALTAYISKWDIENIKTVISSKFLGHGLKETEMFIVSFRDIPMGLIGGVLTNEDYRNMMNLPNVEAIINYLTRYGYGSYMLQFIEDYRKTGDISPMLYSLDRYYYARLLESLKYYNGDEGPVINYIRSDIDRINLNTILKGKKLNISYERFFSGLVDGGNIPINAIHDFYGNSDILSMIDSIKRYYDLEDAKNKYASDGNLYHFDVSMRNIMITKYMGTMSMLPLSLDSIFYFIIRAEIERQNLRTIYEAKLHGAPKESIYDLMINGVV</sequence>
<organism>
    <name type="scientific">Thermoplasma volcanium (strain ATCC 51530 / DSM 4299 / JCM 9571 / NBRC 15438 / GSS1)</name>
    <dbReference type="NCBI Taxonomy" id="273116"/>
    <lineage>
        <taxon>Archaea</taxon>
        <taxon>Methanobacteriati</taxon>
        <taxon>Thermoplasmatota</taxon>
        <taxon>Thermoplasmata</taxon>
        <taxon>Thermoplasmatales</taxon>
        <taxon>Thermoplasmataceae</taxon>
        <taxon>Thermoplasma</taxon>
    </lineage>
</organism>
<evidence type="ECO:0000255" key="1">
    <source>
        <dbReference type="HAMAP-Rule" id="MF_00314"/>
    </source>
</evidence>
<reference key="1">
    <citation type="journal article" date="2000" name="Proc. Natl. Acad. Sci. U.S.A.">
        <title>Archaeal adaptation to higher temperatures revealed by genomic sequence of Thermoplasma volcanium.</title>
        <authorList>
            <person name="Kawashima T."/>
            <person name="Amano N."/>
            <person name="Koike H."/>
            <person name="Makino S."/>
            <person name="Higuchi S."/>
            <person name="Kawashima-Ohya Y."/>
            <person name="Watanabe K."/>
            <person name="Yamazaki M."/>
            <person name="Kanehori K."/>
            <person name="Kawamoto T."/>
            <person name="Nunoshiba T."/>
            <person name="Yamamoto Y."/>
            <person name="Aramaki H."/>
            <person name="Makino K."/>
            <person name="Suzuki M."/>
        </authorList>
    </citation>
    <scope>NUCLEOTIDE SEQUENCE [LARGE SCALE GENOMIC DNA]</scope>
    <source>
        <strain>ATCC 51530 / DSM 4299 / JCM 9571 / NBRC 15438 / GSS1</strain>
    </source>
</reference>
<keyword id="KW-0066">ATP synthesis</keyword>
<keyword id="KW-1003">Cell membrane</keyword>
<keyword id="KW-0375">Hydrogen ion transport</keyword>
<keyword id="KW-0406">Ion transport</keyword>
<keyword id="KW-0472">Membrane</keyword>
<keyword id="KW-0813">Transport</keyword>
<accession>Q97CQ2</accession>
<comment type="function">
    <text evidence="1">Component of the A-type ATP synthase that produces ATP from ADP in the presence of a proton gradient across the membrane.</text>
</comment>
<comment type="subunit">
    <text evidence="1">Has multiple subunits with at least A(3), B(3), C, D, E, F, H, I and proteolipid K(x).</text>
</comment>
<comment type="subcellular location">
    <subcellularLocation>
        <location evidence="1">Cell membrane</location>
        <topology evidence="1">Peripheral membrane protein</topology>
    </subcellularLocation>
</comment>
<comment type="similarity">
    <text evidence="1">Belongs to the V-ATPase V0D/AC39 subunit family.</text>
</comment>
<proteinExistence type="inferred from homology"/>
<dbReference type="EMBL" id="BA000011">
    <property type="protein sequence ID" value="BAB59191.1"/>
    <property type="molecule type" value="Genomic_DNA"/>
</dbReference>
<dbReference type="RefSeq" id="WP_010916306.1">
    <property type="nucleotide sequence ID" value="NC_002689.2"/>
</dbReference>
<dbReference type="SMR" id="Q97CQ2"/>
<dbReference type="STRING" id="273116.gene:9380814"/>
<dbReference type="PaxDb" id="273116-14324263"/>
<dbReference type="GeneID" id="1441536"/>
<dbReference type="KEGG" id="tvo:TVG0051618"/>
<dbReference type="eggNOG" id="arCOG02459">
    <property type="taxonomic scope" value="Archaea"/>
</dbReference>
<dbReference type="HOGENOM" id="CLU_777607_0_0_2"/>
<dbReference type="OrthoDB" id="4272at2157"/>
<dbReference type="PhylomeDB" id="Q97CQ2"/>
<dbReference type="Proteomes" id="UP000001017">
    <property type="component" value="Chromosome"/>
</dbReference>
<dbReference type="GO" id="GO:0005886">
    <property type="term" value="C:plasma membrane"/>
    <property type="evidence" value="ECO:0007669"/>
    <property type="project" value="UniProtKB-SubCell"/>
</dbReference>
<dbReference type="GO" id="GO:0033179">
    <property type="term" value="C:proton-transporting V-type ATPase, V0 domain"/>
    <property type="evidence" value="ECO:0007669"/>
    <property type="project" value="InterPro"/>
</dbReference>
<dbReference type="GO" id="GO:0005524">
    <property type="term" value="F:ATP binding"/>
    <property type="evidence" value="ECO:0007669"/>
    <property type="project" value="UniProtKB-UniRule"/>
</dbReference>
<dbReference type="GO" id="GO:0046933">
    <property type="term" value="F:proton-transporting ATP synthase activity, rotational mechanism"/>
    <property type="evidence" value="ECO:0007669"/>
    <property type="project" value="UniProtKB-UniRule"/>
</dbReference>
<dbReference type="GO" id="GO:0046961">
    <property type="term" value="F:proton-transporting ATPase activity, rotational mechanism"/>
    <property type="evidence" value="ECO:0007669"/>
    <property type="project" value="InterPro"/>
</dbReference>
<dbReference type="GO" id="GO:0042777">
    <property type="term" value="P:proton motive force-driven plasma membrane ATP synthesis"/>
    <property type="evidence" value="ECO:0007669"/>
    <property type="project" value="UniProtKB-UniRule"/>
</dbReference>
<dbReference type="Gene3D" id="1.10.132.50">
    <property type="entry name" value="ATP synthase (C/AC39) subunit, domain 3"/>
    <property type="match status" value="1"/>
</dbReference>
<dbReference type="Gene3D" id="1.20.1690.10">
    <property type="entry name" value="V-type ATP synthase subunit C domain"/>
    <property type="match status" value="2"/>
</dbReference>
<dbReference type="HAMAP" id="MF_00314">
    <property type="entry name" value="ATP_synth_C_arch"/>
    <property type="match status" value="1"/>
</dbReference>
<dbReference type="InterPro" id="IPR036079">
    <property type="entry name" value="ATPase_csu/dsu_sf"/>
</dbReference>
<dbReference type="InterPro" id="IPR014272">
    <property type="entry name" value="ATPase_V0-cplx_csu"/>
</dbReference>
<dbReference type="InterPro" id="IPR002843">
    <property type="entry name" value="ATPase_V0-cplx_csu/dsu"/>
</dbReference>
<dbReference type="InterPro" id="IPR050873">
    <property type="entry name" value="V-ATPase_V0D/AC39_subunit"/>
</dbReference>
<dbReference type="InterPro" id="IPR035067">
    <property type="entry name" value="V-type_ATPase_csu/dsu"/>
</dbReference>
<dbReference type="InterPro" id="IPR044911">
    <property type="entry name" value="V-type_ATPase_csu/dsu_dom_3"/>
</dbReference>
<dbReference type="NCBIfam" id="NF002266">
    <property type="entry name" value="PRK01198.1-2"/>
    <property type="match status" value="1"/>
</dbReference>
<dbReference type="PANTHER" id="PTHR38682">
    <property type="entry name" value="V-TYPE ATP SYNTHASE SUBUNIT C"/>
    <property type="match status" value="1"/>
</dbReference>
<dbReference type="PANTHER" id="PTHR38682:SF1">
    <property type="entry name" value="V-TYPE ATP SYNTHASE SUBUNIT C"/>
    <property type="match status" value="1"/>
</dbReference>
<dbReference type="Pfam" id="PF01992">
    <property type="entry name" value="vATP-synt_AC39"/>
    <property type="match status" value="1"/>
</dbReference>
<dbReference type="SUPFAM" id="SSF103486">
    <property type="entry name" value="V-type ATP synthase subunit C"/>
    <property type="match status" value="1"/>
</dbReference>
<feature type="chain" id="PRO_0000119374" description="A-type ATP synthase subunit C">
    <location>
        <begin position="1"/>
        <end position="356"/>
    </location>
</feature>
<protein>
    <recommendedName>
        <fullName evidence="1">A-type ATP synthase subunit C</fullName>
    </recommendedName>
</protein>
<gene>
    <name evidence="1" type="primary">atpC</name>
    <name type="ordered locus">TV0049</name>
    <name type="ORF">TVG0051618</name>
</gene>